<organism>
    <name type="scientific">Clostridium botulinum D phage</name>
    <name type="common">Clostridium botulinum D bacteriophage</name>
    <dbReference type="NCBI Taxonomy" id="29342"/>
    <lineage>
        <taxon>Viruses</taxon>
        <taxon>Duplodnaviria</taxon>
        <taxon>Heunggongvirae</taxon>
        <taxon>Uroviricota</taxon>
        <taxon>Caudoviricetes</taxon>
    </lineage>
</organism>
<protein>
    <recommendedName>
        <fullName>Hemagglutinin component HA-17 type D</fullName>
    </recommendedName>
    <alternativeName>
        <fullName>ANTP17</fullName>
    </alternativeName>
    <alternativeName>
        <fullName>HA 17 kDa subunit</fullName>
    </alternativeName>
    <alternativeName>
        <fullName evidence="6">HA2</fullName>
    </alternativeName>
</protein>
<dbReference type="EMBL" id="AB037920">
    <property type="protein sequence ID" value="BAA90658.1"/>
    <property type="molecule type" value="Genomic_DNA"/>
</dbReference>
<dbReference type="PDB" id="2E4M">
    <property type="method" value="X-ray"/>
    <property type="resolution" value="1.85 A"/>
    <property type="chains" value="C=1-146"/>
</dbReference>
<dbReference type="PDBsum" id="2E4M"/>
<dbReference type="SMR" id="Q9LBR4"/>
<dbReference type="UniLectin" id="Q9LBR4"/>
<dbReference type="PATRIC" id="fig|1491.434.peg.24"/>
<dbReference type="EvolutionaryTrace" id="Q9LBR4"/>
<dbReference type="GO" id="GO:0005576">
    <property type="term" value="C:extracellular region"/>
    <property type="evidence" value="ECO:0007669"/>
    <property type="project" value="UniProtKB-SubCell"/>
</dbReference>
<dbReference type="CDD" id="cd23494">
    <property type="entry name" value="beta-trefoil_Ricin_HA17"/>
    <property type="match status" value="1"/>
</dbReference>
<dbReference type="Gene3D" id="2.80.10.50">
    <property type="match status" value="1"/>
</dbReference>
<dbReference type="InterPro" id="IPR008903">
    <property type="entry name" value="HA-17_C_botulinum"/>
</dbReference>
<dbReference type="InterPro" id="IPR035992">
    <property type="entry name" value="Ricin_B-like_lectins"/>
</dbReference>
<dbReference type="Pfam" id="PF05588">
    <property type="entry name" value="Botulinum_HA-17"/>
    <property type="match status" value="1"/>
</dbReference>
<dbReference type="PIRSF" id="PIRSF037660">
    <property type="entry name" value="Botulinum_HA-17"/>
    <property type="match status" value="1"/>
</dbReference>
<dbReference type="SUPFAM" id="SSF50370">
    <property type="entry name" value="Ricin B-like lectins"/>
    <property type="match status" value="1"/>
</dbReference>
<feature type="initiator methionine" description="Removed" evidence="2 3 4">
    <location>
        <position position="1"/>
    </location>
</feature>
<feature type="chain" id="PRO_0000445710" description="Hemagglutinin component HA-17 type D">
    <location>
        <begin position="2"/>
        <end position="146"/>
    </location>
</feature>
<feature type="strand" evidence="9">
    <location>
        <begin position="10"/>
        <end position="19"/>
    </location>
</feature>
<feature type="strand" evidence="9">
    <location>
        <begin position="21"/>
        <end position="27"/>
    </location>
</feature>
<feature type="strand" evidence="9">
    <location>
        <begin position="32"/>
        <end position="36"/>
    </location>
</feature>
<feature type="helix" evidence="9">
    <location>
        <begin position="41"/>
        <end position="43"/>
    </location>
</feature>
<feature type="strand" evidence="9">
    <location>
        <begin position="45"/>
        <end position="49"/>
    </location>
</feature>
<feature type="strand" evidence="9">
    <location>
        <begin position="55"/>
        <end position="60"/>
    </location>
</feature>
<feature type="strand" evidence="9">
    <location>
        <begin position="63"/>
        <end position="70"/>
    </location>
</feature>
<feature type="strand" evidence="9">
    <location>
        <begin position="74"/>
        <end position="80"/>
    </location>
</feature>
<feature type="strand" evidence="9">
    <location>
        <begin position="87"/>
        <end position="93"/>
    </location>
</feature>
<feature type="strand" evidence="9">
    <location>
        <begin position="96"/>
        <end position="101"/>
    </location>
</feature>
<feature type="strand" evidence="9">
    <location>
        <begin position="105"/>
        <end position="107"/>
    </location>
</feature>
<feature type="strand" evidence="9">
    <location>
        <begin position="109"/>
        <end position="114"/>
    </location>
</feature>
<feature type="strand" evidence="9">
    <location>
        <begin position="126"/>
        <end position="131"/>
    </location>
</feature>
<feature type="helix" evidence="9">
    <location>
        <begin position="137"/>
        <end position="139"/>
    </location>
</feature>
<feature type="strand" evidence="9">
    <location>
        <begin position="141"/>
        <end position="145"/>
    </location>
</feature>
<organismHost>
    <name type="scientific">Clostridium botulinum</name>
    <dbReference type="NCBI Taxonomy" id="1491"/>
</organismHost>
<comment type="function">
    <text evidence="1 2 3 7">The hemagglutinin (HA) component of the progenitor toxin protects the structural integrity of the neurotoxin; may increase internalization of the neurotoxin into the bloodstream of the host (By similarity). Involved in binding to the small intestine through interactions with glycolipids and glycoproteins containing sialic acid moieties (Probable). The hemagglutinin complex composed of HA-70, HA-33 and HA-17 agglutinates erythrocytes, whereas the individual compenents do not (PubMed:11713244). Erythrocyte agglutination also occurs with the entire toxin complex (PubMed:11713244, PubMed:17581814).</text>
</comment>
<comment type="subunit">
    <text evidence="2 3 4">Botulinum toxins are produced as large progenitor toxins of 12S (M toxin, about 280 kDa) and 16S (L toxin, about 650 kDa) (PubMed:11713244, PubMed:17581814). M toxin consists of a non-toxic, non-hemagglutinin component (NTNHA) and the neurotoxin (BoNT/D) (PubMed:11713244, PubMed:17581814, PubMed:8569530). L toxin consists of the M toxin and the 3 hemagglutinin (HA) subcomponents of 70, 33, and 17 kDa (PubMed:11713244, PubMed:17581814, PubMed:8569530). The stoichiometry of the whole complex has been modeled as one BoNT/D, one NTNHA, three HA-70, six HA-33 and three HA-17 (PubMed:17581814). HA-33 and HA-17 crystallize as a heterotrimer with two HA-33 and one HA-17 (PubMed:17581814).</text>
</comment>
<comment type="subcellular location">
    <subcellularLocation>
        <location evidence="2 3 4">Secreted</location>
    </subcellularLocation>
</comment>
<comment type="miscellaneous">
    <text evidence="7">This protein can also be encoded on a prophage.</text>
</comment>
<name>HA17D_CBDP</name>
<sequence>MSSERTFLPNGNYKIKSLFSDSLYLTYSSGSLSFLNTSSLDNQKWKLEYISSSNGFRFSNVAEPNKYLAYNDYGFIYLSSSSNNSLWNPIKIAINSYIICTLSIVNVTDYAWTIYDNNNNITDQPILNLPNFDINNSNQILKLEKL</sequence>
<keyword id="KW-0002">3D-structure</keyword>
<keyword id="KW-0903">Direct protein sequencing</keyword>
<keyword id="KW-0348">Hemagglutinin</keyword>
<keyword id="KW-0964">Secreted</keyword>
<keyword id="KW-0843">Virulence</keyword>
<gene>
    <name evidence="5" type="primary">ha-17</name>
</gene>
<accession>Q9LBR4</accession>
<evidence type="ECO:0000250" key="1">
    <source>
        <dbReference type="UniProtKB" id="P46083"/>
    </source>
</evidence>
<evidence type="ECO:0000269" key="2">
    <source>
    </source>
</evidence>
<evidence type="ECO:0000269" key="3">
    <source>
    </source>
</evidence>
<evidence type="ECO:0000269" key="4">
    <source>
    </source>
</evidence>
<evidence type="ECO:0000303" key="5">
    <source>
    </source>
</evidence>
<evidence type="ECO:0000303" key="6">
    <source>
    </source>
</evidence>
<evidence type="ECO:0000305" key="7"/>
<evidence type="ECO:0007744" key="8">
    <source>
        <dbReference type="PDB" id="2E4M"/>
    </source>
</evidence>
<evidence type="ECO:0007829" key="9">
    <source>
        <dbReference type="PDB" id="2E4M"/>
    </source>
</evidence>
<reference key="1">
    <citation type="journal article" date="2002" name="J. Biol. Chem.">
        <title>In vitro reconstitution of the Clostridium botulinum type D progenitor toxin.</title>
        <authorList>
            <person name="Kouguchi H."/>
            <person name="Watanabe T."/>
            <person name="Sagane Y."/>
            <person name="Sunagawa H."/>
            <person name="Ohyama T."/>
        </authorList>
    </citation>
    <scope>NUCLEOTIDE SEQUENCE [GENOMIC DNA]</scope>
    <scope>PROTEIN SEQUENCE OF 2-11</scope>
    <scope>FUNCTION</scope>
    <scope>SUBUNIT</scope>
    <scope>SUBCELLULAR LOCATION</scope>
    <source>
        <strain>D-4947 / Type D</strain>
    </source>
</reference>
<reference key="2">
    <citation type="journal article" date="1995" name="Microbiol. Immunol.">
        <title>Characterization of nontoxic-nonhemagglutinin component of the two types of progenitor toxin (M and L) produced by Clostridium botulinum type D CB-16.</title>
        <authorList>
            <person name="Ohyama T."/>
            <person name="Watanabe T."/>
            <person name="Fujinaga Y."/>
            <person name="Inoue K."/>
            <person name="Sunagawa H."/>
            <person name="Fujii N."/>
            <person name="Oguma K."/>
        </authorList>
    </citation>
    <scope>PROTEIN SEQUENCE OF 2-16</scope>
    <scope>SUBUNIT</scope>
    <scope>SUBCELLULAR LOCATION</scope>
    <source>
        <strain>CB-16 / Type D / phage d-16 phi</strain>
    </source>
</reference>
<reference evidence="8" key="3">
    <citation type="journal article" date="2007" name="J. Biol. Chem.">
        <title>A novel subunit structure of Clostridium botulinum serotype D toxin complex with three extended arms.</title>
        <authorList>
            <person name="Hasegawa K."/>
            <person name="Watanabe T."/>
            <person name="Suzuki T."/>
            <person name="Yamano A."/>
            <person name="Oikawa T."/>
            <person name="Sato Y."/>
            <person name="Kouguchi H."/>
            <person name="Yoneyama T."/>
            <person name="Niwa K."/>
            <person name="Ikeda T."/>
            <person name="Ohyama T."/>
        </authorList>
    </citation>
    <scope>X-RAY CRYSTALLOGRAPHY (1.85 ANGSTROMS) IN COMPLEX WITH HA-33</scope>
    <scope>PROTEIN SEQUENCE OF 2-6</scope>
    <scope>FUNCTION</scope>
    <scope>SUBUNIT</scope>
    <scope>SUBCELLULAR LOCATION</scope>
    <source>
        <strain>D-4947 / Type D</strain>
    </source>
</reference>
<proteinExistence type="evidence at protein level"/>